<dbReference type="EC" id="3.6.5.-" evidence="1"/>
<dbReference type="EMBL" id="CP000767">
    <property type="protein sequence ID" value="EAU01014.1"/>
    <property type="molecule type" value="Genomic_DNA"/>
</dbReference>
<dbReference type="RefSeq" id="WP_011992639.1">
    <property type="nucleotide sequence ID" value="NC_009715.2"/>
</dbReference>
<dbReference type="SMR" id="A7H029"/>
<dbReference type="STRING" id="360105.CCV52592_1726"/>
<dbReference type="KEGG" id="ccv:CCV52592_1726"/>
<dbReference type="HOGENOM" id="CLU_011747_2_0_7"/>
<dbReference type="OrthoDB" id="9807318at2"/>
<dbReference type="Proteomes" id="UP000006380">
    <property type="component" value="Chromosome"/>
</dbReference>
<dbReference type="GO" id="GO:0005737">
    <property type="term" value="C:cytoplasm"/>
    <property type="evidence" value="ECO:0007669"/>
    <property type="project" value="UniProtKB-SubCell"/>
</dbReference>
<dbReference type="GO" id="GO:0005525">
    <property type="term" value="F:GTP binding"/>
    <property type="evidence" value="ECO:0007669"/>
    <property type="project" value="UniProtKB-UniRule"/>
</dbReference>
<dbReference type="GO" id="GO:0003924">
    <property type="term" value="F:GTPase activity"/>
    <property type="evidence" value="ECO:0007669"/>
    <property type="project" value="UniProtKB-UniRule"/>
</dbReference>
<dbReference type="GO" id="GO:0000287">
    <property type="term" value="F:magnesium ion binding"/>
    <property type="evidence" value="ECO:0007669"/>
    <property type="project" value="InterPro"/>
</dbReference>
<dbReference type="GO" id="GO:0042254">
    <property type="term" value="P:ribosome biogenesis"/>
    <property type="evidence" value="ECO:0007669"/>
    <property type="project" value="UniProtKB-UniRule"/>
</dbReference>
<dbReference type="CDD" id="cd01898">
    <property type="entry name" value="Obg"/>
    <property type="match status" value="1"/>
</dbReference>
<dbReference type="FunFam" id="2.70.210.12:FF:000001">
    <property type="entry name" value="GTPase Obg"/>
    <property type="match status" value="1"/>
</dbReference>
<dbReference type="Gene3D" id="2.70.210.12">
    <property type="entry name" value="GTP1/OBG domain"/>
    <property type="match status" value="1"/>
</dbReference>
<dbReference type="Gene3D" id="3.40.50.300">
    <property type="entry name" value="P-loop containing nucleotide triphosphate hydrolases"/>
    <property type="match status" value="1"/>
</dbReference>
<dbReference type="HAMAP" id="MF_01454">
    <property type="entry name" value="GTPase_Obg"/>
    <property type="match status" value="1"/>
</dbReference>
<dbReference type="InterPro" id="IPR031167">
    <property type="entry name" value="G_OBG"/>
</dbReference>
<dbReference type="InterPro" id="IPR006073">
    <property type="entry name" value="GTP-bd"/>
</dbReference>
<dbReference type="InterPro" id="IPR014100">
    <property type="entry name" value="GTP-bd_Obg/CgtA"/>
</dbReference>
<dbReference type="InterPro" id="IPR006074">
    <property type="entry name" value="GTP1-OBG_CS"/>
</dbReference>
<dbReference type="InterPro" id="IPR006169">
    <property type="entry name" value="GTP1_OBG_dom"/>
</dbReference>
<dbReference type="InterPro" id="IPR036726">
    <property type="entry name" value="GTP1_OBG_dom_sf"/>
</dbReference>
<dbReference type="InterPro" id="IPR045086">
    <property type="entry name" value="OBG_GTPase"/>
</dbReference>
<dbReference type="InterPro" id="IPR027417">
    <property type="entry name" value="P-loop_NTPase"/>
</dbReference>
<dbReference type="NCBIfam" id="TIGR02729">
    <property type="entry name" value="Obg_CgtA"/>
    <property type="match status" value="1"/>
</dbReference>
<dbReference type="NCBIfam" id="NF008955">
    <property type="entry name" value="PRK12297.1"/>
    <property type="match status" value="1"/>
</dbReference>
<dbReference type="NCBIfam" id="NF008956">
    <property type="entry name" value="PRK12299.1"/>
    <property type="match status" value="1"/>
</dbReference>
<dbReference type="PANTHER" id="PTHR11702">
    <property type="entry name" value="DEVELOPMENTALLY REGULATED GTP-BINDING PROTEIN-RELATED"/>
    <property type="match status" value="1"/>
</dbReference>
<dbReference type="PANTHER" id="PTHR11702:SF31">
    <property type="entry name" value="MITOCHONDRIAL RIBOSOME-ASSOCIATED GTPASE 2"/>
    <property type="match status" value="1"/>
</dbReference>
<dbReference type="Pfam" id="PF01018">
    <property type="entry name" value="GTP1_OBG"/>
    <property type="match status" value="1"/>
</dbReference>
<dbReference type="Pfam" id="PF01926">
    <property type="entry name" value="MMR_HSR1"/>
    <property type="match status" value="1"/>
</dbReference>
<dbReference type="PIRSF" id="PIRSF002401">
    <property type="entry name" value="GTP_bd_Obg/CgtA"/>
    <property type="match status" value="1"/>
</dbReference>
<dbReference type="PRINTS" id="PR00326">
    <property type="entry name" value="GTP1OBG"/>
</dbReference>
<dbReference type="SUPFAM" id="SSF82051">
    <property type="entry name" value="Obg GTP-binding protein N-terminal domain"/>
    <property type="match status" value="1"/>
</dbReference>
<dbReference type="SUPFAM" id="SSF52540">
    <property type="entry name" value="P-loop containing nucleoside triphosphate hydrolases"/>
    <property type="match status" value="1"/>
</dbReference>
<dbReference type="PROSITE" id="PS51710">
    <property type="entry name" value="G_OBG"/>
    <property type="match status" value="1"/>
</dbReference>
<dbReference type="PROSITE" id="PS00905">
    <property type="entry name" value="GTP1_OBG"/>
    <property type="match status" value="1"/>
</dbReference>
<dbReference type="PROSITE" id="PS51883">
    <property type="entry name" value="OBG"/>
    <property type="match status" value="1"/>
</dbReference>
<protein>
    <recommendedName>
        <fullName evidence="1">GTPase Obg</fullName>
        <ecNumber evidence="1">3.6.5.-</ecNumber>
    </recommendedName>
    <alternativeName>
        <fullName evidence="1">GTP-binding protein Obg</fullName>
    </alternativeName>
</protein>
<feature type="chain" id="PRO_0000385799" description="GTPase Obg">
    <location>
        <begin position="1"/>
        <end position="376"/>
    </location>
</feature>
<feature type="domain" description="Obg" evidence="2">
    <location>
        <begin position="1"/>
        <end position="158"/>
    </location>
</feature>
<feature type="domain" description="OBG-type G" evidence="1">
    <location>
        <begin position="159"/>
        <end position="359"/>
    </location>
</feature>
<feature type="binding site" evidence="1">
    <location>
        <begin position="165"/>
        <end position="172"/>
    </location>
    <ligand>
        <name>GTP</name>
        <dbReference type="ChEBI" id="CHEBI:37565"/>
    </ligand>
</feature>
<feature type="binding site" evidence="1">
    <location>
        <position position="172"/>
    </location>
    <ligand>
        <name>Mg(2+)</name>
        <dbReference type="ChEBI" id="CHEBI:18420"/>
    </ligand>
</feature>
<feature type="binding site" evidence="1">
    <location>
        <begin position="190"/>
        <end position="194"/>
    </location>
    <ligand>
        <name>GTP</name>
        <dbReference type="ChEBI" id="CHEBI:37565"/>
    </ligand>
</feature>
<feature type="binding site" evidence="1">
    <location>
        <position position="192"/>
    </location>
    <ligand>
        <name>Mg(2+)</name>
        <dbReference type="ChEBI" id="CHEBI:18420"/>
    </ligand>
</feature>
<feature type="binding site" evidence="1">
    <location>
        <begin position="212"/>
        <end position="215"/>
    </location>
    <ligand>
        <name>GTP</name>
        <dbReference type="ChEBI" id="CHEBI:37565"/>
    </ligand>
</feature>
<feature type="binding site" evidence="1">
    <location>
        <begin position="280"/>
        <end position="283"/>
    </location>
    <ligand>
        <name>GTP</name>
        <dbReference type="ChEBI" id="CHEBI:37565"/>
    </ligand>
</feature>
<feature type="binding site" evidence="1">
    <location>
        <begin position="340"/>
        <end position="342"/>
    </location>
    <ligand>
        <name>GTP</name>
        <dbReference type="ChEBI" id="CHEBI:37565"/>
    </ligand>
</feature>
<evidence type="ECO:0000255" key="1">
    <source>
        <dbReference type="HAMAP-Rule" id="MF_01454"/>
    </source>
</evidence>
<evidence type="ECO:0000255" key="2">
    <source>
        <dbReference type="PROSITE-ProRule" id="PRU01231"/>
    </source>
</evidence>
<organism>
    <name type="scientific">Campylobacter curvus (strain 525.92)</name>
    <dbReference type="NCBI Taxonomy" id="360105"/>
    <lineage>
        <taxon>Bacteria</taxon>
        <taxon>Pseudomonadati</taxon>
        <taxon>Campylobacterota</taxon>
        <taxon>Epsilonproteobacteria</taxon>
        <taxon>Campylobacterales</taxon>
        <taxon>Campylobacteraceae</taxon>
        <taxon>Campylobacter</taxon>
    </lineage>
</organism>
<proteinExistence type="inferred from homology"/>
<gene>
    <name evidence="1" type="primary">obg</name>
    <name type="ordered locus">Ccur92_15170</name>
    <name type="ORF">CCV52592_1726</name>
</gene>
<sequence length="376" mass="40842">MFIDSVNLTLSSGHGGAGAVSFRREKHVILGGPDGGDGGDGGDVYLIADNNSHTLAAYKGKRALKAQNGEAGSGRRMTGKKGENLELIVPPGTAVYDAQTNELLADLTKESERVLFLKGGKGGLGNVHFKSSINQAPEYAQKGLPEETRDVRLELKLIADVGLVGFPNVGKSTLISTVSNAKPQIANYEFTTLTPKLGLVEVDEYSGFVMADIPGIIEGASDGRGLGLKFLKHIERTKILLYMLDLANHRSLKEQFVTLRGEVEKFSPELAKRDFAIALTRMDAAENLERKVGEFLQILGLSGERSNLIDEAGKAGKNLIYKQDIYEFDDSKPYFVMPISSATNQNITELKFSLLELLKKGKFQMIFAGNLTETRG</sequence>
<name>OBG_CAMC5</name>
<accession>A7H029</accession>
<reference key="1">
    <citation type="submission" date="2007-07" db="EMBL/GenBank/DDBJ databases">
        <title>Genome sequence of Campylobacter curvus 525.92 isolated from human feces.</title>
        <authorList>
            <person name="Fouts D.E."/>
            <person name="Mongodin E.F."/>
            <person name="Puiu D."/>
            <person name="Sebastian Y."/>
            <person name="Miller W.G."/>
            <person name="Mandrell R.E."/>
            <person name="Lastovica A.J."/>
            <person name="Nelson K.E."/>
        </authorList>
    </citation>
    <scope>NUCLEOTIDE SEQUENCE [LARGE SCALE GENOMIC DNA]</scope>
    <source>
        <strain>525.92</strain>
    </source>
</reference>
<keyword id="KW-0963">Cytoplasm</keyword>
<keyword id="KW-0342">GTP-binding</keyword>
<keyword id="KW-0378">Hydrolase</keyword>
<keyword id="KW-0460">Magnesium</keyword>
<keyword id="KW-0479">Metal-binding</keyword>
<keyword id="KW-0547">Nucleotide-binding</keyword>
<keyword id="KW-1185">Reference proteome</keyword>
<comment type="function">
    <text evidence="1">An essential GTPase which binds GTP, GDP and possibly (p)ppGpp with moderate affinity, with high nucleotide exchange rates and a fairly low GTP hydrolysis rate. Plays a role in control of the cell cycle, stress response, ribosome biogenesis and in those bacteria that undergo differentiation, in morphogenesis control.</text>
</comment>
<comment type="cofactor">
    <cofactor evidence="1">
        <name>Mg(2+)</name>
        <dbReference type="ChEBI" id="CHEBI:18420"/>
    </cofactor>
</comment>
<comment type="subunit">
    <text evidence="1">Monomer.</text>
</comment>
<comment type="subcellular location">
    <subcellularLocation>
        <location evidence="1">Cytoplasm</location>
    </subcellularLocation>
</comment>
<comment type="similarity">
    <text evidence="1">Belongs to the TRAFAC class OBG-HflX-like GTPase superfamily. OBG GTPase family.</text>
</comment>